<organism>
    <name type="scientific">Cryptococcus neoformans var. neoformans serotype D (strain B-3501A)</name>
    <name type="common">Filobasidiella neoformans</name>
    <dbReference type="NCBI Taxonomy" id="283643"/>
    <lineage>
        <taxon>Eukaryota</taxon>
        <taxon>Fungi</taxon>
        <taxon>Dikarya</taxon>
        <taxon>Basidiomycota</taxon>
        <taxon>Agaricomycotina</taxon>
        <taxon>Tremellomycetes</taxon>
        <taxon>Tremellales</taxon>
        <taxon>Cryptococcaceae</taxon>
        <taxon>Cryptococcus</taxon>
        <taxon>Cryptococcus neoformans species complex</taxon>
    </lineage>
</organism>
<proteinExistence type="inferred from homology"/>
<evidence type="ECO:0000250" key="1"/>
<evidence type="ECO:0000255" key="2"/>
<evidence type="ECO:0000255" key="3">
    <source>
        <dbReference type="PROSITE-ProRule" id="PRU00541"/>
    </source>
</evidence>
<evidence type="ECO:0000255" key="4">
    <source>
        <dbReference type="PROSITE-ProRule" id="PRU00542"/>
    </source>
</evidence>
<evidence type="ECO:0000256" key="5">
    <source>
        <dbReference type="SAM" id="MobiDB-lite"/>
    </source>
</evidence>
<evidence type="ECO:0000305" key="6"/>
<keyword id="KW-0067">ATP-binding</keyword>
<keyword id="KW-0175">Coiled coil</keyword>
<keyword id="KW-0347">Helicase</keyword>
<keyword id="KW-0378">Hydrolase</keyword>
<keyword id="KW-0547">Nucleotide-binding</keyword>
<keyword id="KW-0539">Nucleus</keyword>
<keyword id="KW-0690">Ribosome biogenesis</keyword>
<keyword id="KW-0694">RNA-binding</keyword>
<accession>P0CQ93</accession>
<accession>Q55TT3</accession>
<accession>Q5KIK3</accession>
<gene>
    <name type="primary">DRS1</name>
    <name type="ordered locus">CNBD3700</name>
</gene>
<protein>
    <recommendedName>
        <fullName>ATP-dependent RNA helicase DRS1</fullName>
        <ecNumber>3.6.4.13</ecNumber>
    </recommendedName>
</protein>
<name>DRS1_CRYNB</name>
<comment type="function">
    <text evidence="1">ATP-binding RNA helicase involved in ribosome assembly.</text>
</comment>
<comment type="catalytic activity">
    <reaction>
        <text>ATP + H2O = ADP + phosphate + H(+)</text>
        <dbReference type="Rhea" id="RHEA:13065"/>
        <dbReference type="ChEBI" id="CHEBI:15377"/>
        <dbReference type="ChEBI" id="CHEBI:15378"/>
        <dbReference type="ChEBI" id="CHEBI:30616"/>
        <dbReference type="ChEBI" id="CHEBI:43474"/>
        <dbReference type="ChEBI" id="CHEBI:456216"/>
        <dbReference type="EC" id="3.6.4.13"/>
    </reaction>
</comment>
<comment type="subunit">
    <text evidence="1">Associates with pre-ribosomal particles.</text>
</comment>
<comment type="subcellular location">
    <subcellularLocation>
        <location evidence="1">Nucleus</location>
        <location evidence="1">Nucleolus</location>
    </subcellularLocation>
</comment>
<comment type="domain">
    <text>The Q motif is unique to and characteristic of the DEAD box family of RNA helicases and controls ATP binding and hydrolysis.</text>
</comment>
<comment type="similarity">
    <text evidence="6">Belongs to the DEAD box helicase family. DDX27/DRS1 subfamily.</text>
</comment>
<reference key="1">
    <citation type="journal article" date="2005" name="Science">
        <title>The genome of the basidiomycetous yeast and human pathogen Cryptococcus neoformans.</title>
        <authorList>
            <person name="Loftus B.J."/>
            <person name="Fung E."/>
            <person name="Roncaglia P."/>
            <person name="Rowley D."/>
            <person name="Amedeo P."/>
            <person name="Bruno D."/>
            <person name="Vamathevan J."/>
            <person name="Miranda M."/>
            <person name="Anderson I.J."/>
            <person name="Fraser J.A."/>
            <person name="Allen J.E."/>
            <person name="Bosdet I.E."/>
            <person name="Brent M.R."/>
            <person name="Chiu R."/>
            <person name="Doering T.L."/>
            <person name="Donlin M.J."/>
            <person name="D'Souza C.A."/>
            <person name="Fox D.S."/>
            <person name="Grinberg V."/>
            <person name="Fu J."/>
            <person name="Fukushima M."/>
            <person name="Haas B.J."/>
            <person name="Huang J.C."/>
            <person name="Janbon G."/>
            <person name="Jones S.J.M."/>
            <person name="Koo H.L."/>
            <person name="Krzywinski M.I."/>
            <person name="Kwon-Chung K.J."/>
            <person name="Lengeler K.B."/>
            <person name="Maiti R."/>
            <person name="Marra M.A."/>
            <person name="Marra R.E."/>
            <person name="Mathewson C.A."/>
            <person name="Mitchell T.G."/>
            <person name="Pertea M."/>
            <person name="Riggs F.R."/>
            <person name="Salzberg S.L."/>
            <person name="Schein J.E."/>
            <person name="Shvartsbeyn A."/>
            <person name="Shin H."/>
            <person name="Shumway M."/>
            <person name="Specht C.A."/>
            <person name="Suh B.B."/>
            <person name="Tenney A."/>
            <person name="Utterback T.R."/>
            <person name="Wickes B.L."/>
            <person name="Wortman J.R."/>
            <person name="Wye N.H."/>
            <person name="Kronstad J.W."/>
            <person name="Lodge J.K."/>
            <person name="Heitman J."/>
            <person name="Davis R.W."/>
            <person name="Fraser C.M."/>
            <person name="Hyman R.W."/>
        </authorList>
    </citation>
    <scope>NUCLEOTIDE SEQUENCE [LARGE SCALE GENOMIC DNA]</scope>
    <source>
        <strain>B-3501A</strain>
    </source>
</reference>
<sequence>MIIHSSSSNSKKEYTMADDFITTIDSDDEVSNYGEPSALPKIKDDELDPDFQFDLGGGRSEGLDLWGGDEVQGVKKGNEPINVDDIIERKRGKPIRAFKDRKRKRDEDATSEDDLEEDEEEEGDSNDDSDAAKSGDSEEDEMDVDMSEGDGDEEDENEIESLKREDESDEEEEEEEDDYDEEGENEVVDSDSESEEETAAEIARKDAFFSSDPTTTDPTLPSSFTAMNLSRPLLRALTSLQFTAPTPIQARAIPLALLGRDILGSAVTGSGKTAAFMVPILERLCYRDRGKGGAACRVLVLCPTRELAVQCEAVGKALAEKGGLDVRFALLVGGLSLNAQAHTLRTLPDILIATPGRLIDHLTNTPSFTLSALDVLVIDEADRMLEAGFTDELEEIIKACPRSRQTMLFSATMTDSVDELVKLSLDKPIRVFVDPKRNTARGLTQEFVRIRSDDSRSPSLLALCKRTIREKCIIFFRSKALAHQMRIVFGLFGLKAAELHGNLTQEQRLQALNDFKAGTVDYLLATDLASRGLDIKGVETVINYDMPGQLAQYTHRVGRTARAGRKGRSVSLVGEADRKMLKAAIKQAEADQVRHRIIPSEAVTAMKEKLEEFKDDIQEILKEEKEEKLLRQADMEIKKGQNMVEHEAEIFSRPARTWFQSGKEKQASKSAGKDAYVGSFPSTGKSAEKEKEKLKRGKYDGLSRRLKRRKMAIEEDAADAAAARKTEMGIRAAKKNALPKKITEPQPRLEKAGKGKDKKKGKARRVTGGKGSAFDSEGKKSHEGMRAKPAKVNLEKGKKKGGKGKGRK</sequence>
<feature type="chain" id="PRO_0000410257" description="ATP-dependent RNA helicase DRS1">
    <location>
        <begin position="1"/>
        <end position="808"/>
    </location>
</feature>
<feature type="domain" description="Helicase ATP-binding" evidence="3">
    <location>
        <begin position="253"/>
        <end position="431"/>
    </location>
</feature>
<feature type="domain" description="Helicase C-terminal" evidence="4">
    <location>
        <begin position="442"/>
        <end position="621"/>
    </location>
</feature>
<feature type="region of interest" description="Disordered" evidence="5">
    <location>
        <begin position="27"/>
        <end position="46"/>
    </location>
</feature>
<feature type="region of interest" description="Disordered" evidence="5">
    <location>
        <begin position="64"/>
        <end position="223"/>
    </location>
</feature>
<feature type="region of interest" description="Disordered" evidence="5">
    <location>
        <begin position="661"/>
        <end position="808"/>
    </location>
</feature>
<feature type="coiled-coil region" evidence="2">
    <location>
        <begin position="575"/>
        <end position="645"/>
    </location>
</feature>
<feature type="short sequence motif" description="Q motif">
    <location>
        <begin position="222"/>
        <end position="250"/>
    </location>
</feature>
<feature type="short sequence motif" description="DEAD box">
    <location>
        <begin position="379"/>
        <end position="382"/>
    </location>
</feature>
<feature type="compositionally biased region" description="Basic residues" evidence="5">
    <location>
        <begin position="90"/>
        <end position="104"/>
    </location>
</feature>
<feature type="compositionally biased region" description="Acidic residues" evidence="5">
    <location>
        <begin position="109"/>
        <end position="129"/>
    </location>
</feature>
<feature type="compositionally biased region" description="Acidic residues" evidence="5">
    <location>
        <begin position="137"/>
        <end position="159"/>
    </location>
</feature>
<feature type="compositionally biased region" description="Acidic residues" evidence="5">
    <location>
        <begin position="167"/>
        <end position="199"/>
    </location>
</feature>
<feature type="compositionally biased region" description="Low complexity" evidence="5">
    <location>
        <begin position="208"/>
        <end position="223"/>
    </location>
</feature>
<feature type="compositionally biased region" description="Basic and acidic residues" evidence="5">
    <location>
        <begin position="686"/>
        <end position="703"/>
    </location>
</feature>
<feature type="compositionally biased region" description="Basic and acidic residues" evidence="5">
    <location>
        <begin position="741"/>
        <end position="755"/>
    </location>
</feature>
<feature type="compositionally biased region" description="Basic residues" evidence="5">
    <location>
        <begin position="756"/>
        <end position="767"/>
    </location>
</feature>
<feature type="compositionally biased region" description="Basic and acidic residues" evidence="5">
    <location>
        <begin position="776"/>
        <end position="786"/>
    </location>
</feature>
<feature type="compositionally biased region" description="Basic residues" evidence="5">
    <location>
        <begin position="797"/>
        <end position="808"/>
    </location>
</feature>
<feature type="binding site" evidence="3">
    <location>
        <begin position="266"/>
        <end position="273"/>
    </location>
    <ligand>
        <name>ATP</name>
        <dbReference type="ChEBI" id="CHEBI:30616"/>
    </ligand>
</feature>
<dbReference type="EC" id="3.6.4.13"/>
<dbReference type="EMBL" id="AAEY01000020">
    <property type="protein sequence ID" value="EAL21316.1"/>
    <property type="molecule type" value="Genomic_DNA"/>
</dbReference>
<dbReference type="RefSeq" id="XP_775963.1">
    <property type="nucleotide sequence ID" value="XM_770870.1"/>
</dbReference>
<dbReference type="SMR" id="P0CQ93"/>
<dbReference type="EnsemblFungi" id="AAW43165">
    <property type="protein sequence ID" value="AAW43165"/>
    <property type="gene ID" value="CND02650"/>
</dbReference>
<dbReference type="GeneID" id="4935759"/>
<dbReference type="KEGG" id="cnb:CNBD3700"/>
<dbReference type="VEuPathDB" id="FungiDB:CNBD3700"/>
<dbReference type="HOGENOM" id="CLU_003041_3_2_1"/>
<dbReference type="OrthoDB" id="7350at5206"/>
<dbReference type="GO" id="GO:0005829">
    <property type="term" value="C:cytosol"/>
    <property type="evidence" value="ECO:0007669"/>
    <property type="project" value="TreeGrafter"/>
</dbReference>
<dbReference type="GO" id="GO:0005730">
    <property type="term" value="C:nucleolus"/>
    <property type="evidence" value="ECO:0007669"/>
    <property type="project" value="UniProtKB-SubCell"/>
</dbReference>
<dbReference type="GO" id="GO:0030687">
    <property type="term" value="C:preribosome, large subunit precursor"/>
    <property type="evidence" value="ECO:0007669"/>
    <property type="project" value="EnsemblFungi"/>
</dbReference>
<dbReference type="GO" id="GO:0005524">
    <property type="term" value="F:ATP binding"/>
    <property type="evidence" value="ECO:0007669"/>
    <property type="project" value="UniProtKB-KW"/>
</dbReference>
<dbReference type="GO" id="GO:0016887">
    <property type="term" value="F:ATP hydrolysis activity"/>
    <property type="evidence" value="ECO:0007669"/>
    <property type="project" value="RHEA"/>
</dbReference>
<dbReference type="GO" id="GO:0003723">
    <property type="term" value="F:RNA binding"/>
    <property type="evidence" value="ECO:0007669"/>
    <property type="project" value="UniProtKB-KW"/>
</dbReference>
<dbReference type="GO" id="GO:0003724">
    <property type="term" value="F:RNA helicase activity"/>
    <property type="evidence" value="ECO:0007669"/>
    <property type="project" value="UniProtKB-EC"/>
</dbReference>
<dbReference type="GO" id="GO:0000027">
    <property type="term" value="P:ribosomal large subunit assembly"/>
    <property type="evidence" value="ECO:0007669"/>
    <property type="project" value="EnsemblFungi"/>
</dbReference>
<dbReference type="GO" id="GO:0006364">
    <property type="term" value="P:rRNA processing"/>
    <property type="evidence" value="ECO:0007669"/>
    <property type="project" value="EnsemblFungi"/>
</dbReference>
<dbReference type="CDD" id="cd17947">
    <property type="entry name" value="DEADc_DDX27"/>
    <property type="match status" value="1"/>
</dbReference>
<dbReference type="CDD" id="cd18787">
    <property type="entry name" value="SF2_C_DEAD"/>
    <property type="match status" value="1"/>
</dbReference>
<dbReference type="Gene3D" id="3.40.50.300">
    <property type="entry name" value="P-loop containing nucleotide triphosphate hydrolases"/>
    <property type="match status" value="2"/>
</dbReference>
<dbReference type="InterPro" id="IPR011545">
    <property type="entry name" value="DEAD/DEAH_box_helicase_dom"/>
</dbReference>
<dbReference type="InterPro" id="IPR050079">
    <property type="entry name" value="DEAD_box_RNA_helicase"/>
</dbReference>
<dbReference type="InterPro" id="IPR014001">
    <property type="entry name" value="Helicase_ATP-bd"/>
</dbReference>
<dbReference type="InterPro" id="IPR001650">
    <property type="entry name" value="Helicase_C-like"/>
</dbReference>
<dbReference type="InterPro" id="IPR027417">
    <property type="entry name" value="P-loop_NTPase"/>
</dbReference>
<dbReference type="InterPro" id="IPR000629">
    <property type="entry name" value="RNA-helicase_DEAD-box_CS"/>
</dbReference>
<dbReference type="InterPro" id="IPR014014">
    <property type="entry name" value="RNA_helicase_DEAD_Q_motif"/>
</dbReference>
<dbReference type="PANTHER" id="PTHR47959:SF1">
    <property type="entry name" value="ATP-DEPENDENT RNA HELICASE DBPA"/>
    <property type="match status" value="1"/>
</dbReference>
<dbReference type="PANTHER" id="PTHR47959">
    <property type="entry name" value="ATP-DEPENDENT RNA HELICASE RHLE-RELATED"/>
    <property type="match status" value="1"/>
</dbReference>
<dbReference type="Pfam" id="PF00270">
    <property type="entry name" value="DEAD"/>
    <property type="match status" value="1"/>
</dbReference>
<dbReference type="Pfam" id="PF00271">
    <property type="entry name" value="Helicase_C"/>
    <property type="match status" value="1"/>
</dbReference>
<dbReference type="SMART" id="SM00487">
    <property type="entry name" value="DEXDc"/>
    <property type="match status" value="1"/>
</dbReference>
<dbReference type="SMART" id="SM00490">
    <property type="entry name" value="HELICc"/>
    <property type="match status" value="1"/>
</dbReference>
<dbReference type="SUPFAM" id="SSF52540">
    <property type="entry name" value="P-loop containing nucleoside triphosphate hydrolases"/>
    <property type="match status" value="1"/>
</dbReference>
<dbReference type="PROSITE" id="PS00039">
    <property type="entry name" value="DEAD_ATP_HELICASE"/>
    <property type="match status" value="1"/>
</dbReference>
<dbReference type="PROSITE" id="PS51192">
    <property type="entry name" value="HELICASE_ATP_BIND_1"/>
    <property type="match status" value="1"/>
</dbReference>
<dbReference type="PROSITE" id="PS51194">
    <property type="entry name" value="HELICASE_CTER"/>
    <property type="match status" value="1"/>
</dbReference>
<dbReference type="PROSITE" id="PS51195">
    <property type="entry name" value="Q_MOTIF"/>
    <property type="match status" value="1"/>
</dbReference>